<evidence type="ECO:0000255" key="1">
    <source>
        <dbReference type="HAMAP-Rule" id="MF_00577"/>
    </source>
</evidence>
<sequence>MVKETKRMIQAKKGIELECKGWEQEAVLRMLYNNLDPEVAEKPDELIVYGGIGKAARNWAAFEAIVEQLRTLEKDETLLIQSGKPVGRFKTHEQAPRVLLSNSVLVPKWAHWEHFNELEKQGLMMYGQMTAGSWIYIGSQGILQGTYETFAELARQHFGGSLKGTLTLTAGLGGMGGAQPLAVTMNGGVVIGVDVDRSRIEKRIATKYTDRITESLDQALAWASEAKAKGEPLSIGLVGNAAHLHHEILQRGVEVDVVTDQTSAHDPLNGYIPEGHSLEGAELLRKENPQRYMALAKQSMKKHVEAMLAFQRRGAIVFDYGNNIRQVAKDEGLEEAFAFPGFVPAYIRPLFCEGKGPFRWAALSGDPEDIYRTDRLIKELFPENEALIRWIDIAQEKVTFQGLPARICWLGYGERMKMGLEINRLVRNGELKAPIVIGRDHLDCGSVASPNRETEAMKDGSDAVGDWAILNALINTAAGGSWISVHHGGGVGMGYSLHAGMVVVADGTENAEKRLRRVLTTDPGMGIIRHADAGYELAKQVAREKGVMIPMEDKNEEGV</sequence>
<gene>
    <name evidence="1" type="primary">hutU</name>
    <name type="ordered locus">BH1983</name>
</gene>
<proteinExistence type="inferred from homology"/>
<accession>Q9KBE5</accession>
<keyword id="KW-0963">Cytoplasm</keyword>
<keyword id="KW-0369">Histidine metabolism</keyword>
<keyword id="KW-0456">Lyase</keyword>
<keyword id="KW-0520">NAD</keyword>
<keyword id="KW-1185">Reference proteome</keyword>
<name>HUTU_HALH5</name>
<feature type="chain" id="PRO_0000207333" description="Urocanate hydratase">
    <location>
        <begin position="1"/>
        <end position="559"/>
    </location>
</feature>
<feature type="active site" evidence="1">
    <location>
        <position position="408"/>
    </location>
</feature>
<feature type="binding site" evidence="1">
    <location>
        <begin position="50"/>
        <end position="51"/>
    </location>
    <ligand>
        <name>NAD(+)</name>
        <dbReference type="ChEBI" id="CHEBI:57540"/>
    </ligand>
</feature>
<feature type="binding site" evidence="1">
    <location>
        <position position="128"/>
    </location>
    <ligand>
        <name>NAD(+)</name>
        <dbReference type="ChEBI" id="CHEBI:57540"/>
    </ligand>
</feature>
<feature type="binding site" evidence="1">
    <location>
        <begin position="174"/>
        <end position="176"/>
    </location>
    <ligand>
        <name>NAD(+)</name>
        <dbReference type="ChEBI" id="CHEBI:57540"/>
    </ligand>
</feature>
<feature type="binding site" evidence="1">
    <location>
        <position position="194"/>
    </location>
    <ligand>
        <name>NAD(+)</name>
        <dbReference type="ChEBI" id="CHEBI:57540"/>
    </ligand>
</feature>
<feature type="binding site" evidence="1">
    <location>
        <position position="199"/>
    </location>
    <ligand>
        <name>NAD(+)</name>
        <dbReference type="ChEBI" id="CHEBI:57540"/>
    </ligand>
</feature>
<feature type="binding site" evidence="1">
    <location>
        <begin position="240"/>
        <end position="241"/>
    </location>
    <ligand>
        <name>NAD(+)</name>
        <dbReference type="ChEBI" id="CHEBI:57540"/>
    </ligand>
</feature>
<feature type="binding site" evidence="1">
    <location>
        <begin position="261"/>
        <end position="265"/>
    </location>
    <ligand>
        <name>NAD(+)</name>
        <dbReference type="ChEBI" id="CHEBI:57540"/>
    </ligand>
</feature>
<feature type="binding site" evidence="1">
    <location>
        <begin position="271"/>
        <end position="272"/>
    </location>
    <ligand>
        <name>NAD(+)</name>
        <dbReference type="ChEBI" id="CHEBI:57540"/>
    </ligand>
</feature>
<feature type="binding site" evidence="1">
    <location>
        <position position="320"/>
    </location>
    <ligand>
        <name>NAD(+)</name>
        <dbReference type="ChEBI" id="CHEBI:57540"/>
    </ligand>
</feature>
<feature type="binding site" evidence="1">
    <location>
        <position position="490"/>
    </location>
    <ligand>
        <name>NAD(+)</name>
        <dbReference type="ChEBI" id="CHEBI:57540"/>
    </ligand>
</feature>
<dbReference type="EC" id="4.2.1.49" evidence="1"/>
<dbReference type="EMBL" id="BA000004">
    <property type="protein sequence ID" value="BAB05702.1"/>
    <property type="molecule type" value="Genomic_DNA"/>
</dbReference>
<dbReference type="PIR" id="G83897">
    <property type="entry name" value="G83897"/>
</dbReference>
<dbReference type="RefSeq" id="WP_010898141.1">
    <property type="nucleotide sequence ID" value="NC_002570.2"/>
</dbReference>
<dbReference type="SMR" id="Q9KBE5"/>
<dbReference type="STRING" id="272558.gene:10727881"/>
<dbReference type="KEGG" id="bha:BH1983"/>
<dbReference type="eggNOG" id="COG2987">
    <property type="taxonomic scope" value="Bacteria"/>
</dbReference>
<dbReference type="HOGENOM" id="CLU_018868_0_1_9"/>
<dbReference type="OrthoDB" id="9764874at2"/>
<dbReference type="UniPathway" id="UPA00379">
    <property type="reaction ID" value="UER00550"/>
</dbReference>
<dbReference type="Proteomes" id="UP000001258">
    <property type="component" value="Chromosome"/>
</dbReference>
<dbReference type="GO" id="GO:0005737">
    <property type="term" value="C:cytoplasm"/>
    <property type="evidence" value="ECO:0007669"/>
    <property type="project" value="UniProtKB-SubCell"/>
</dbReference>
<dbReference type="GO" id="GO:0016153">
    <property type="term" value="F:urocanate hydratase activity"/>
    <property type="evidence" value="ECO:0007669"/>
    <property type="project" value="UniProtKB-UniRule"/>
</dbReference>
<dbReference type="GO" id="GO:0019556">
    <property type="term" value="P:L-histidine catabolic process to glutamate and formamide"/>
    <property type="evidence" value="ECO:0007669"/>
    <property type="project" value="UniProtKB-UniPathway"/>
</dbReference>
<dbReference type="GO" id="GO:0019557">
    <property type="term" value="P:L-histidine catabolic process to glutamate and formate"/>
    <property type="evidence" value="ECO:0007669"/>
    <property type="project" value="UniProtKB-UniPathway"/>
</dbReference>
<dbReference type="FunFam" id="3.40.50.10730:FF:000001">
    <property type="entry name" value="Urocanate hydratase"/>
    <property type="match status" value="1"/>
</dbReference>
<dbReference type="Gene3D" id="3.40.50.10730">
    <property type="entry name" value="Urocanase like domains"/>
    <property type="match status" value="1"/>
</dbReference>
<dbReference type="Gene3D" id="3.40.1770.10">
    <property type="entry name" value="Urocanase superfamily"/>
    <property type="match status" value="1"/>
</dbReference>
<dbReference type="HAMAP" id="MF_00577">
    <property type="entry name" value="HutU"/>
    <property type="match status" value="1"/>
</dbReference>
<dbReference type="InterPro" id="IPR055351">
    <property type="entry name" value="Urocanase"/>
</dbReference>
<dbReference type="InterPro" id="IPR023637">
    <property type="entry name" value="Urocanase-like"/>
</dbReference>
<dbReference type="InterPro" id="IPR035401">
    <property type="entry name" value="Urocanase_C"/>
</dbReference>
<dbReference type="InterPro" id="IPR038364">
    <property type="entry name" value="Urocanase_central_sf"/>
</dbReference>
<dbReference type="InterPro" id="IPR023636">
    <property type="entry name" value="Urocanase_CS"/>
</dbReference>
<dbReference type="InterPro" id="IPR035400">
    <property type="entry name" value="Urocanase_N"/>
</dbReference>
<dbReference type="InterPro" id="IPR035085">
    <property type="entry name" value="Urocanase_Rossmann-like"/>
</dbReference>
<dbReference type="InterPro" id="IPR036190">
    <property type="entry name" value="Urocanase_sf"/>
</dbReference>
<dbReference type="NCBIfam" id="TIGR01228">
    <property type="entry name" value="hutU"/>
    <property type="match status" value="1"/>
</dbReference>
<dbReference type="NCBIfam" id="NF003820">
    <property type="entry name" value="PRK05414.1"/>
    <property type="match status" value="1"/>
</dbReference>
<dbReference type="PANTHER" id="PTHR12216">
    <property type="entry name" value="UROCANATE HYDRATASE"/>
    <property type="match status" value="1"/>
</dbReference>
<dbReference type="PANTHER" id="PTHR12216:SF4">
    <property type="entry name" value="UROCANATE HYDRATASE"/>
    <property type="match status" value="1"/>
</dbReference>
<dbReference type="Pfam" id="PF01175">
    <property type="entry name" value="Urocanase"/>
    <property type="match status" value="1"/>
</dbReference>
<dbReference type="Pfam" id="PF17392">
    <property type="entry name" value="Urocanase_C"/>
    <property type="match status" value="1"/>
</dbReference>
<dbReference type="Pfam" id="PF17391">
    <property type="entry name" value="Urocanase_N"/>
    <property type="match status" value="1"/>
</dbReference>
<dbReference type="PIRSF" id="PIRSF001423">
    <property type="entry name" value="Urocanate_hydrat"/>
    <property type="match status" value="1"/>
</dbReference>
<dbReference type="SUPFAM" id="SSF111326">
    <property type="entry name" value="Urocanase"/>
    <property type="match status" value="1"/>
</dbReference>
<dbReference type="PROSITE" id="PS01233">
    <property type="entry name" value="UROCANASE"/>
    <property type="match status" value="1"/>
</dbReference>
<organism>
    <name type="scientific">Halalkalibacterium halodurans (strain ATCC BAA-125 / DSM 18197 / FERM 7344 / JCM 9153 / C-125)</name>
    <name type="common">Bacillus halodurans</name>
    <dbReference type="NCBI Taxonomy" id="272558"/>
    <lineage>
        <taxon>Bacteria</taxon>
        <taxon>Bacillati</taxon>
        <taxon>Bacillota</taxon>
        <taxon>Bacilli</taxon>
        <taxon>Bacillales</taxon>
        <taxon>Bacillaceae</taxon>
        <taxon>Halalkalibacterium (ex Joshi et al. 2022)</taxon>
    </lineage>
</organism>
<reference key="1">
    <citation type="journal article" date="2000" name="Nucleic Acids Res.">
        <title>Complete genome sequence of the alkaliphilic bacterium Bacillus halodurans and genomic sequence comparison with Bacillus subtilis.</title>
        <authorList>
            <person name="Takami H."/>
            <person name="Nakasone K."/>
            <person name="Takaki Y."/>
            <person name="Maeno G."/>
            <person name="Sasaki R."/>
            <person name="Masui N."/>
            <person name="Fuji F."/>
            <person name="Hirama C."/>
            <person name="Nakamura Y."/>
            <person name="Ogasawara N."/>
            <person name="Kuhara S."/>
            <person name="Horikoshi K."/>
        </authorList>
    </citation>
    <scope>NUCLEOTIDE SEQUENCE [LARGE SCALE GENOMIC DNA]</scope>
    <source>
        <strain>ATCC BAA-125 / DSM 18197 / FERM 7344 / JCM 9153 / C-125</strain>
    </source>
</reference>
<protein>
    <recommendedName>
        <fullName evidence="1">Urocanate hydratase</fullName>
        <shortName evidence="1">Urocanase</shortName>
        <ecNumber evidence="1">4.2.1.49</ecNumber>
    </recommendedName>
    <alternativeName>
        <fullName evidence="1">Imidazolonepropionate hydrolase</fullName>
    </alternativeName>
</protein>
<comment type="function">
    <text evidence="1">Catalyzes the conversion of urocanate to 4-imidazolone-5-propionate.</text>
</comment>
<comment type="catalytic activity">
    <reaction evidence="1">
        <text>4-imidazolone-5-propanoate = trans-urocanate + H2O</text>
        <dbReference type="Rhea" id="RHEA:13101"/>
        <dbReference type="ChEBI" id="CHEBI:15377"/>
        <dbReference type="ChEBI" id="CHEBI:17771"/>
        <dbReference type="ChEBI" id="CHEBI:77893"/>
        <dbReference type="EC" id="4.2.1.49"/>
    </reaction>
</comment>
<comment type="cofactor">
    <cofactor evidence="1">
        <name>NAD(+)</name>
        <dbReference type="ChEBI" id="CHEBI:57540"/>
    </cofactor>
    <text evidence="1">Binds 1 NAD(+) per subunit.</text>
</comment>
<comment type="pathway">
    <text evidence="1">Amino-acid degradation; L-histidine degradation into L-glutamate; N-formimidoyl-L-glutamate from L-histidine: step 2/3.</text>
</comment>
<comment type="subcellular location">
    <subcellularLocation>
        <location evidence="1">Cytoplasm</location>
    </subcellularLocation>
</comment>
<comment type="similarity">
    <text evidence="1">Belongs to the urocanase family.</text>
</comment>